<protein>
    <recommendedName>
        <fullName>Putative S-adenosyl-L-methionine-dependent methyltransferase Mvan_1344</fullName>
        <ecNumber>2.1.1.-</ecNumber>
    </recommendedName>
</protein>
<feature type="chain" id="PRO_0000361258" description="Putative S-adenosyl-L-methionine-dependent methyltransferase Mvan_1344">
    <location>
        <begin position="1"/>
        <end position="305"/>
    </location>
</feature>
<feature type="binding site" evidence="1">
    <location>
        <position position="130"/>
    </location>
    <ligand>
        <name>S-adenosyl-L-methionine</name>
        <dbReference type="ChEBI" id="CHEBI:59789"/>
    </ligand>
</feature>
<feature type="binding site" evidence="1">
    <location>
        <begin position="159"/>
        <end position="160"/>
    </location>
    <ligand>
        <name>S-adenosyl-L-methionine</name>
        <dbReference type="ChEBI" id="CHEBI:59789"/>
    </ligand>
</feature>
<sequence length="305" mass="32738">MARTADDSWDPASSVGATATMVAAGRAAASADPDPLINDPYAEPLVRAVGLSFFTKMLDGELDLSQFADGSPERVQAMIDGMAVRTRFFDDCCGTSTTAGITQVVILASGLDARAYRLGWPAGTVVYELDQPAVIEFKTRTLAGLGAHPTATHRPVPIDLREDWPAALHAAGFDASRPTAWLAEGLLIYLPPEAQDQLFDRITALSAPGSTIATEYAPGIIDFDDEKARAMSAPMREMGLDIDMPSLVYAGTRSHVMDYLAGQGWEVTGVPRRELFTRYGRPLPPEAGDTDPLGEIVYVSAHRPQ</sequence>
<gene>
    <name type="ordered locus">Mvan_1344</name>
</gene>
<accession>A1T4S8</accession>
<name>Y1344_MYCVP</name>
<proteinExistence type="inferred from homology"/>
<keyword id="KW-0489">Methyltransferase</keyword>
<keyword id="KW-0949">S-adenosyl-L-methionine</keyword>
<keyword id="KW-0808">Transferase</keyword>
<evidence type="ECO:0000250" key="1"/>
<evidence type="ECO:0000305" key="2"/>
<dbReference type="EC" id="2.1.1.-"/>
<dbReference type="EMBL" id="CP000511">
    <property type="protein sequence ID" value="ABM12178.1"/>
    <property type="molecule type" value="Genomic_DNA"/>
</dbReference>
<dbReference type="RefSeq" id="WP_011778607.1">
    <property type="nucleotide sequence ID" value="NC_008726.1"/>
</dbReference>
<dbReference type="SMR" id="A1T4S8"/>
<dbReference type="STRING" id="350058.Mvan_1344"/>
<dbReference type="KEGG" id="mva:Mvan_1344"/>
<dbReference type="eggNOG" id="COG3315">
    <property type="taxonomic scope" value="Bacteria"/>
</dbReference>
<dbReference type="HOGENOM" id="CLU_056160_2_1_11"/>
<dbReference type="Proteomes" id="UP000009159">
    <property type="component" value="Chromosome"/>
</dbReference>
<dbReference type="GO" id="GO:0008168">
    <property type="term" value="F:methyltransferase activity"/>
    <property type="evidence" value="ECO:0007669"/>
    <property type="project" value="UniProtKB-KW"/>
</dbReference>
<dbReference type="GO" id="GO:0032259">
    <property type="term" value="P:methylation"/>
    <property type="evidence" value="ECO:0007669"/>
    <property type="project" value="UniProtKB-KW"/>
</dbReference>
<dbReference type="FunFam" id="3.40.50.150:FF:000152">
    <property type="entry name" value="S-adenosyl-L-methionine-dependent methyltransferase"/>
    <property type="match status" value="1"/>
</dbReference>
<dbReference type="Gene3D" id="3.40.50.150">
    <property type="entry name" value="Vaccinia Virus protein VP39"/>
    <property type="match status" value="1"/>
</dbReference>
<dbReference type="InterPro" id="IPR007213">
    <property type="entry name" value="Ppm1/Ppm2/Tcmp"/>
</dbReference>
<dbReference type="InterPro" id="IPR029063">
    <property type="entry name" value="SAM-dependent_MTases_sf"/>
</dbReference>
<dbReference type="InterPro" id="IPR011610">
    <property type="entry name" value="SAM_mthyl_Trfase_ML2640-like"/>
</dbReference>
<dbReference type="NCBIfam" id="TIGR00027">
    <property type="entry name" value="mthyl_TIGR00027"/>
    <property type="match status" value="1"/>
</dbReference>
<dbReference type="PANTHER" id="PTHR43619">
    <property type="entry name" value="S-ADENOSYL-L-METHIONINE-DEPENDENT METHYLTRANSFERASE YKTD-RELATED"/>
    <property type="match status" value="1"/>
</dbReference>
<dbReference type="PANTHER" id="PTHR43619:SF2">
    <property type="entry name" value="S-ADENOSYL-L-METHIONINE-DEPENDENT METHYLTRANSFERASES SUPERFAMILY PROTEIN"/>
    <property type="match status" value="1"/>
</dbReference>
<dbReference type="Pfam" id="PF04072">
    <property type="entry name" value="LCM"/>
    <property type="match status" value="1"/>
</dbReference>
<dbReference type="SUPFAM" id="SSF53335">
    <property type="entry name" value="S-adenosyl-L-methionine-dependent methyltransferases"/>
    <property type="match status" value="1"/>
</dbReference>
<reference key="1">
    <citation type="submission" date="2006-12" db="EMBL/GenBank/DDBJ databases">
        <title>Complete sequence of Mycobacterium vanbaalenii PYR-1.</title>
        <authorList>
            <consortium name="US DOE Joint Genome Institute"/>
            <person name="Copeland A."/>
            <person name="Lucas S."/>
            <person name="Lapidus A."/>
            <person name="Barry K."/>
            <person name="Detter J.C."/>
            <person name="Glavina del Rio T."/>
            <person name="Hammon N."/>
            <person name="Israni S."/>
            <person name="Dalin E."/>
            <person name="Tice H."/>
            <person name="Pitluck S."/>
            <person name="Singan V."/>
            <person name="Schmutz J."/>
            <person name="Larimer F."/>
            <person name="Land M."/>
            <person name="Hauser L."/>
            <person name="Kyrpides N."/>
            <person name="Anderson I.J."/>
            <person name="Miller C."/>
            <person name="Richardson P."/>
        </authorList>
    </citation>
    <scope>NUCLEOTIDE SEQUENCE [LARGE SCALE GENOMIC DNA]</scope>
    <source>
        <strain>DSM 7251 / JCM 13017 / BCRC 16820 / KCTC 9966 / NRRL B-24157 / PYR-1</strain>
    </source>
</reference>
<organism>
    <name type="scientific">Mycolicibacterium vanbaalenii (strain DSM 7251 / JCM 13017 / BCRC 16820 / KCTC 9966 / NRRL B-24157 / PYR-1)</name>
    <name type="common">Mycobacterium vanbaalenii</name>
    <dbReference type="NCBI Taxonomy" id="350058"/>
    <lineage>
        <taxon>Bacteria</taxon>
        <taxon>Bacillati</taxon>
        <taxon>Actinomycetota</taxon>
        <taxon>Actinomycetes</taxon>
        <taxon>Mycobacteriales</taxon>
        <taxon>Mycobacteriaceae</taxon>
        <taxon>Mycolicibacterium</taxon>
    </lineage>
</organism>
<comment type="function">
    <text evidence="1">Exhibits S-adenosyl-L-methionine-dependent methyltransferase activity.</text>
</comment>
<comment type="similarity">
    <text evidence="2">Belongs to the UPF0677 family.</text>
</comment>